<comment type="catalytic activity">
    <reaction evidence="1">
        <text>tRNA(His) + L-histidine + ATP = L-histidyl-tRNA(His) + AMP + diphosphate + H(+)</text>
        <dbReference type="Rhea" id="RHEA:17313"/>
        <dbReference type="Rhea" id="RHEA-COMP:9665"/>
        <dbReference type="Rhea" id="RHEA-COMP:9689"/>
        <dbReference type="ChEBI" id="CHEBI:15378"/>
        <dbReference type="ChEBI" id="CHEBI:30616"/>
        <dbReference type="ChEBI" id="CHEBI:33019"/>
        <dbReference type="ChEBI" id="CHEBI:57595"/>
        <dbReference type="ChEBI" id="CHEBI:78442"/>
        <dbReference type="ChEBI" id="CHEBI:78527"/>
        <dbReference type="ChEBI" id="CHEBI:456215"/>
        <dbReference type="EC" id="6.1.1.21"/>
    </reaction>
</comment>
<comment type="subunit">
    <text evidence="1">Homodimer.</text>
</comment>
<comment type="subcellular location">
    <subcellularLocation>
        <location evidence="1">Cytoplasm</location>
    </subcellularLocation>
</comment>
<comment type="similarity">
    <text evidence="1">Belongs to the class-II aminoacyl-tRNA synthetase family.</text>
</comment>
<organism>
    <name type="scientific">Corynebacterium diphtheriae (strain ATCC 700971 / NCTC 13129 / Biotype gravis)</name>
    <dbReference type="NCBI Taxonomy" id="257309"/>
    <lineage>
        <taxon>Bacteria</taxon>
        <taxon>Bacillati</taxon>
        <taxon>Actinomycetota</taxon>
        <taxon>Actinomycetes</taxon>
        <taxon>Mycobacteriales</taxon>
        <taxon>Corynebacteriaceae</taxon>
        <taxon>Corynebacterium</taxon>
    </lineage>
</organism>
<feature type="chain" id="PRO_0000136145" description="Histidine--tRNA ligase">
    <location>
        <begin position="1"/>
        <end position="423"/>
    </location>
</feature>
<reference key="1">
    <citation type="journal article" date="2003" name="Nucleic Acids Res.">
        <title>The complete genome sequence and analysis of Corynebacterium diphtheriae NCTC13129.</title>
        <authorList>
            <person name="Cerdeno-Tarraga A.-M."/>
            <person name="Efstratiou A."/>
            <person name="Dover L.G."/>
            <person name="Holden M.T.G."/>
            <person name="Pallen M.J."/>
            <person name="Bentley S.D."/>
            <person name="Besra G.S."/>
            <person name="Churcher C.M."/>
            <person name="James K.D."/>
            <person name="De Zoysa A."/>
            <person name="Chillingworth T."/>
            <person name="Cronin A."/>
            <person name="Dowd L."/>
            <person name="Feltwell T."/>
            <person name="Hamlin N."/>
            <person name="Holroyd S."/>
            <person name="Jagels K."/>
            <person name="Moule S."/>
            <person name="Quail M.A."/>
            <person name="Rabbinowitsch E."/>
            <person name="Rutherford K.M."/>
            <person name="Thomson N.R."/>
            <person name="Unwin L."/>
            <person name="Whitehead S."/>
            <person name="Barrell B.G."/>
            <person name="Parkhill J."/>
        </authorList>
    </citation>
    <scope>NUCLEOTIDE SEQUENCE [LARGE SCALE GENOMIC DNA]</scope>
    <source>
        <strain>ATCC 700971 / NCTC 13129 / Biotype gravis</strain>
    </source>
</reference>
<protein>
    <recommendedName>
        <fullName evidence="1">Histidine--tRNA ligase</fullName>
        <ecNumber evidence="1">6.1.1.21</ecNumber>
    </recommendedName>
    <alternativeName>
        <fullName evidence="1">Histidyl-tRNA synthetase</fullName>
        <shortName evidence="1">HisRS</shortName>
    </alternativeName>
</protein>
<sequence length="423" mass="46691">MSKKKLQTIQAPKGVPDYIPPVSPEFLGVRDTFAHQAHLAGYEHIELPIFEDTTLFARGVGESTDVVTKEMYTFADRGDRSVTLRPEGTAGVMRAVIEHNLDRGQLPVKLNYYGPFFRYERPQAGRYRQLQQVGVEAIGVDDPALDAEVIALADRSLKVIGLTGYRLELTSLGDHTCRPQYREKLQEFLFKLPLDEETRHRAEINPLRVLDDKRPEIQEMTVDAPLMLDNLSDSSREHFELVTGMLDDLNVAYVVNPRMVRGLDYYTKTTFEFVHDGLGAQSGIGGGGRYDGLMAQLGGQELSGIGYALGVDRCLLALEAEQKRVTDGSRVNVFGVAMGSAAKREMVRIIDALRSAGISADMAYGDRGLKGAMKGADRAGARFALVLGDRELENNCVAVKDLAQQGQRDVSLDNLILEIQSAL</sequence>
<gene>
    <name evidence="1" type="primary">hisS</name>
    <name type="ordered locus">DIP1360</name>
</gene>
<name>SYH_CORDI</name>
<proteinExistence type="inferred from homology"/>
<accession>P60914</accession>
<evidence type="ECO:0000255" key="1">
    <source>
        <dbReference type="HAMAP-Rule" id="MF_00127"/>
    </source>
</evidence>
<keyword id="KW-0030">Aminoacyl-tRNA synthetase</keyword>
<keyword id="KW-0067">ATP-binding</keyword>
<keyword id="KW-0963">Cytoplasm</keyword>
<keyword id="KW-0436">Ligase</keyword>
<keyword id="KW-0547">Nucleotide-binding</keyword>
<keyword id="KW-0648">Protein biosynthesis</keyword>
<keyword id="KW-1185">Reference proteome</keyword>
<dbReference type="EC" id="6.1.1.21" evidence="1"/>
<dbReference type="EMBL" id="BX248357">
    <property type="protein sequence ID" value="CAE49888.1"/>
    <property type="molecule type" value="Genomic_DNA"/>
</dbReference>
<dbReference type="RefSeq" id="WP_010935008.1">
    <property type="nucleotide sequence ID" value="NC_002935.2"/>
</dbReference>
<dbReference type="SMR" id="P60914"/>
<dbReference type="STRING" id="257309.DIP1360"/>
<dbReference type="KEGG" id="cdi:DIP1360"/>
<dbReference type="HOGENOM" id="CLU_025113_1_1_11"/>
<dbReference type="Proteomes" id="UP000002198">
    <property type="component" value="Chromosome"/>
</dbReference>
<dbReference type="GO" id="GO:0005737">
    <property type="term" value="C:cytoplasm"/>
    <property type="evidence" value="ECO:0007669"/>
    <property type="project" value="UniProtKB-SubCell"/>
</dbReference>
<dbReference type="GO" id="GO:0005524">
    <property type="term" value="F:ATP binding"/>
    <property type="evidence" value="ECO:0007669"/>
    <property type="project" value="UniProtKB-UniRule"/>
</dbReference>
<dbReference type="GO" id="GO:0004821">
    <property type="term" value="F:histidine-tRNA ligase activity"/>
    <property type="evidence" value="ECO:0007669"/>
    <property type="project" value="UniProtKB-UniRule"/>
</dbReference>
<dbReference type="GO" id="GO:0006427">
    <property type="term" value="P:histidyl-tRNA aminoacylation"/>
    <property type="evidence" value="ECO:0007669"/>
    <property type="project" value="UniProtKB-UniRule"/>
</dbReference>
<dbReference type="CDD" id="cd00773">
    <property type="entry name" value="HisRS-like_core"/>
    <property type="match status" value="1"/>
</dbReference>
<dbReference type="CDD" id="cd00859">
    <property type="entry name" value="HisRS_anticodon"/>
    <property type="match status" value="1"/>
</dbReference>
<dbReference type="Gene3D" id="3.40.50.800">
    <property type="entry name" value="Anticodon-binding domain"/>
    <property type="match status" value="1"/>
</dbReference>
<dbReference type="Gene3D" id="3.30.930.10">
    <property type="entry name" value="Bira Bifunctional Protein, Domain 2"/>
    <property type="match status" value="1"/>
</dbReference>
<dbReference type="HAMAP" id="MF_00127">
    <property type="entry name" value="His_tRNA_synth"/>
    <property type="match status" value="1"/>
</dbReference>
<dbReference type="InterPro" id="IPR006195">
    <property type="entry name" value="aa-tRNA-synth_II"/>
</dbReference>
<dbReference type="InterPro" id="IPR045864">
    <property type="entry name" value="aa-tRNA-synth_II/BPL/LPL"/>
</dbReference>
<dbReference type="InterPro" id="IPR004154">
    <property type="entry name" value="Anticodon-bd"/>
</dbReference>
<dbReference type="InterPro" id="IPR036621">
    <property type="entry name" value="Anticodon-bd_dom_sf"/>
</dbReference>
<dbReference type="InterPro" id="IPR015807">
    <property type="entry name" value="His-tRNA-ligase"/>
</dbReference>
<dbReference type="InterPro" id="IPR041715">
    <property type="entry name" value="HisRS-like_core"/>
</dbReference>
<dbReference type="InterPro" id="IPR004516">
    <property type="entry name" value="HisRS/HisZ"/>
</dbReference>
<dbReference type="InterPro" id="IPR033656">
    <property type="entry name" value="HisRS_anticodon"/>
</dbReference>
<dbReference type="NCBIfam" id="TIGR00442">
    <property type="entry name" value="hisS"/>
    <property type="match status" value="1"/>
</dbReference>
<dbReference type="PANTHER" id="PTHR43707:SF1">
    <property type="entry name" value="HISTIDINE--TRNA LIGASE, MITOCHONDRIAL-RELATED"/>
    <property type="match status" value="1"/>
</dbReference>
<dbReference type="PANTHER" id="PTHR43707">
    <property type="entry name" value="HISTIDYL-TRNA SYNTHETASE"/>
    <property type="match status" value="1"/>
</dbReference>
<dbReference type="Pfam" id="PF03129">
    <property type="entry name" value="HGTP_anticodon"/>
    <property type="match status" value="1"/>
</dbReference>
<dbReference type="Pfam" id="PF13393">
    <property type="entry name" value="tRNA-synt_His"/>
    <property type="match status" value="1"/>
</dbReference>
<dbReference type="PIRSF" id="PIRSF001549">
    <property type="entry name" value="His-tRNA_synth"/>
    <property type="match status" value="1"/>
</dbReference>
<dbReference type="SUPFAM" id="SSF52954">
    <property type="entry name" value="Class II aaRS ABD-related"/>
    <property type="match status" value="1"/>
</dbReference>
<dbReference type="SUPFAM" id="SSF55681">
    <property type="entry name" value="Class II aaRS and biotin synthetases"/>
    <property type="match status" value="1"/>
</dbReference>
<dbReference type="PROSITE" id="PS50862">
    <property type="entry name" value="AA_TRNA_LIGASE_II"/>
    <property type="match status" value="1"/>
</dbReference>